<protein>
    <recommendedName>
        <fullName evidence="1">2-succinyl-5-enolpyruvyl-6-hydroxy-3-cyclohexene-1-carboxylate synthase</fullName>
        <shortName evidence="1">SEPHCHC synthase</shortName>
        <ecNumber evidence="1">2.2.1.9</ecNumber>
    </recommendedName>
</protein>
<name>MEND_PARMW</name>
<comment type="function">
    <text evidence="1">Catalyzes the thiamine diphosphate-dependent decarboxylation of 2-oxoglutarate and the subsequent addition of the resulting succinic semialdehyde-thiamine pyrophosphate anion to isochorismate to yield 2-succinyl-5-enolpyruvyl-6-hydroxy-3-cyclohexene-1-carboxylate (SEPHCHC).</text>
</comment>
<comment type="catalytic activity">
    <reaction evidence="1">
        <text>isochorismate + 2-oxoglutarate + H(+) = 5-enolpyruvoyl-6-hydroxy-2-succinyl-cyclohex-3-ene-1-carboxylate + CO2</text>
        <dbReference type="Rhea" id="RHEA:25593"/>
        <dbReference type="ChEBI" id="CHEBI:15378"/>
        <dbReference type="ChEBI" id="CHEBI:16526"/>
        <dbReference type="ChEBI" id="CHEBI:16810"/>
        <dbReference type="ChEBI" id="CHEBI:29780"/>
        <dbReference type="ChEBI" id="CHEBI:58818"/>
        <dbReference type="EC" id="2.2.1.9"/>
    </reaction>
</comment>
<comment type="cofactor">
    <cofactor evidence="1">
        <name>Mg(2+)</name>
        <dbReference type="ChEBI" id="CHEBI:18420"/>
    </cofactor>
    <cofactor evidence="1">
        <name>Mn(2+)</name>
        <dbReference type="ChEBI" id="CHEBI:29035"/>
    </cofactor>
</comment>
<comment type="cofactor">
    <cofactor evidence="1">
        <name>thiamine diphosphate</name>
        <dbReference type="ChEBI" id="CHEBI:58937"/>
    </cofactor>
    <text evidence="1">Binds 1 thiamine pyrophosphate per subunit.</text>
</comment>
<comment type="pathway">
    <text evidence="1">Quinol/quinone metabolism; 1,4-dihydroxy-2-naphthoate biosynthesis; 1,4-dihydroxy-2-naphthoate from chorismate: step 2/7.</text>
</comment>
<comment type="pathway">
    <text evidence="1">Cofactor biosynthesis; phylloquinone biosynthesis.</text>
</comment>
<comment type="subunit">
    <text evidence="1">Homodimer.</text>
</comment>
<comment type="similarity">
    <text evidence="1">Belongs to the TPP enzyme family. MenD subfamily.</text>
</comment>
<sequence>MTRLVLCPGSRSGPLAAAAGLLAARGDLALTTAIDERSAAFLALGMATAGGRAVAVVTTSGTAVANLLPAAVEADRSTQPLLLLTADRPARLKNCGANQTVNQEQFLQPVCRWLGHGAPEGLASQPPQALFDLAHEAWRHCHGRPPGPVQLNLPFEEPLHGAPEDQLSLQVSGLQRSAPAPSSDSPLGAAPQLDPNQAGVVVAGPWRGLAPALPAYQQALLQWLARSGWPLLADPLAAIPADCPGQLDGWELQLDRLQLAPGSPVLRLGPLPASRRLEAWLQRQTGPQLLISEGEPRGLDPLGLADQWSGGLAAWWAEQNQDFPGASTPEQLMPQSGIASLLRQRLPLQGAVNEPALAHWLPLLLPPQLPVMLAASSPVRDWLIWGGLQAQNRRCFSFRGASGIDGTLSLAMGLAMEQGPMVLVTGDLALLHDSNGWLHGAQGNPPLLVLLIDNQGGGIFQQLPIQSKQFDRLFAMPQRVNPLALAAAHGIDGRQVACLEDLPEALEWGLAQGRPALLRLATDREADARLRTQLRSAAQNAEPLL</sequence>
<dbReference type="EC" id="2.2.1.9" evidence="1"/>
<dbReference type="EMBL" id="BX569691">
    <property type="protein sequence ID" value="CAE07512.1"/>
    <property type="molecule type" value="Genomic_DNA"/>
</dbReference>
<dbReference type="SMR" id="Q7U7I5"/>
<dbReference type="STRING" id="84588.SYNW0997"/>
<dbReference type="KEGG" id="syw:SYNW0997"/>
<dbReference type="eggNOG" id="COG1165">
    <property type="taxonomic scope" value="Bacteria"/>
</dbReference>
<dbReference type="HOGENOM" id="CLU_006051_4_0_3"/>
<dbReference type="UniPathway" id="UPA00995"/>
<dbReference type="UniPathway" id="UPA01057">
    <property type="reaction ID" value="UER00164"/>
</dbReference>
<dbReference type="Proteomes" id="UP000001422">
    <property type="component" value="Chromosome"/>
</dbReference>
<dbReference type="GO" id="GO:0070204">
    <property type="term" value="F:2-succinyl-5-enolpyruvyl-6-hydroxy-3-cyclohexene-1-carboxylic-acid synthase activity"/>
    <property type="evidence" value="ECO:0007669"/>
    <property type="project" value="UniProtKB-UniRule"/>
</dbReference>
<dbReference type="GO" id="GO:0000287">
    <property type="term" value="F:magnesium ion binding"/>
    <property type="evidence" value="ECO:0007669"/>
    <property type="project" value="UniProtKB-UniRule"/>
</dbReference>
<dbReference type="GO" id="GO:0030145">
    <property type="term" value="F:manganese ion binding"/>
    <property type="evidence" value="ECO:0007669"/>
    <property type="project" value="UniProtKB-UniRule"/>
</dbReference>
<dbReference type="GO" id="GO:0030976">
    <property type="term" value="F:thiamine pyrophosphate binding"/>
    <property type="evidence" value="ECO:0007669"/>
    <property type="project" value="UniProtKB-UniRule"/>
</dbReference>
<dbReference type="GO" id="GO:0009234">
    <property type="term" value="P:menaquinone biosynthetic process"/>
    <property type="evidence" value="ECO:0007669"/>
    <property type="project" value="InterPro"/>
</dbReference>
<dbReference type="GO" id="GO:0042372">
    <property type="term" value="P:phylloquinone biosynthetic process"/>
    <property type="evidence" value="ECO:0007669"/>
    <property type="project" value="UniProtKB-UniRule"/>
</dbReference>
<dbReference type="CDD" id="cd07037">
    <property type="entry name" value="TPP_PYR_MenD"/>
    <property type="match status" value="1"/>
</dbReference>
<dbReference type="CDD" id="cd02009">
    <property type="entry name" value="TPP_SHCHC_synthase"/>
    <property type="match status" value="1"/>
</dbReference>
<dbReference type="Gene3D" id="3.40.50.970">
    <property type="match status" value="2"/>
</dbReference>
<dbReference type="Gene3D" id="3.40.50.1220">
    <property type="entry name" value="TPP-binding domain"/>
    <property type="match status" value="1"/>
</dbReference>
<dbReference type="HAMAP" id="MF_01659">
    <property type="entry name" value="MenD"/>
    <property type="match status" value="1"/>
</dbReference>
<dbReference type="InterPro" id="IPR004433">
    <property type="entry name" value="MenaQ_synth_MenD"/>
</dbReference>
<dbReference type="InterPro" id="IPR029061">
    <property type="entry name" value="THDP-binding"/>
</dbReference>
<dbReference type="InterPro" id="IPR012001">
    <property type="entry name" value="Thiamin_PyroP_enz_TPP-bd_dom"/>
</dbReference>
<dbReference type="InterPro" id="IPR011766">
    <property type="entry name" value="TPP_enzyme_TPP-bd"/>
</dbReference>
<dbReference type="NCBIfam" id="TIGR00173">
    <property type="entry name" value="menD"/>
    <property type="match status" value="1"/>
</dbReference>
<dbReference type="PANTHER" id="PTHR42916">
    <property type="entry name" value="2-SUCCINYL-5-ENOLPYRUVYL-6-HYDROXY-3-CYCLOHEXENE-1-CARBOXYLATE SYNTHASE"/>
    <property type="match status" value="1"/>
</dbReference>
<dbReference type="PANTHER" id="PTHR42916:SF1">
    <property type="entry name" value="PROTEIN PHYLLO, CHLOROPLASTIC"/>
    <property type="match status" value="1"/>
</dbReference>
<dbReference type="Pfam" id="PF02775">
    <property type="entry name" value="TPP_enzyme_C"/>
    <property type="match status" value="1"/>
</dbReference>
<dbReference type="Pfam" id="PF02776">
    <property type="entry name" value="TPP_enzyme_N"/>
    <property type="match status" value="1"/>
</dbReference>
<dbReference type="PIRSF" id="PIRSF004983">
    <property type="entry name" value="MenD"/>
    <property type="match status" value="1"/>
</dbReference>
<dbReference type="SUPFAM" id="SSF52518">
    <property type="entry name" value="Thiamin diphosphate-binding fold (THDP-binding)"/>
    <property type="match status" value="2"/>
</dbReference>
<accession>Q7U7I5</accession>
<proteinExistence type="inferred from homology"/>
<organism>
    <name type="scientific">Parasynechococcus marenigrum (strain WH8102)</name>
    <dbReference type="NCBI Taxonomy" id="84588"/>
    <lineage>
        <taxon>Bacteria</taxon>
        <taxon>Bacillati</taxon>
        <taxon>Cyanobacteriota</taxon>
        <taxon>Cyanophyceae</taxon>
        <taxon>Synechococcales</taxon>
        <taxon>Prochlorococcaceae</taxon>
        <taxon>Parasynechococcus</taxon>
        <taxon>Parasynechococcus marenigrum</taxon>
    </lineage>
</organism>
<evidence type="ECO:0000255" key="1">
    <source>
        <dbReference type="HAMAP-Rule" id="MF_01659"/>
    </source>
</evidence>
<evidence type="ECO:0000256" key="2">
    <source>
        <dbReference type="SAM" id="MobiDB-lite"/>
    </source>
</evidence>
<gene>
    <name evidence="1" type="primary">menD</name>
    <name type="ordered locus">SYNW0997</name>
</gene>
<feature type="chain" id="PRO_0000341877" description="2-succinyl-5-enolpyruvyl-6-hydroxy-3-cyclohexene-1-carboxylate synthase">
    <location>
        <begin position="1"/>
        <end position="545"/>
    </location>
</feature>
<feature type="region of interest" description="Disordered" evidence="2">
    <location>
        <begin position="170"/>
        <end position="193"/>
    </location>
</feature>
<feature type="compositionally biased region" description="Polar residues" evidence="2">
    <location>
        <begin position="170"/>
        <end position="185"/>
    </location>
</feature>
<keyword id="KW-0460">Magnesium</keyword>
<keyword id="KW-0464">Manganese</keyword>
<keyword id="KW-0479">Metal-binding</keyword>
<keyword id="KW-0786">Thiamine pyrophosphate</keyword>
<keyword id="KW-0808">Transferase</keyword>
<reference key="1">
    <citation type="journal article" date="2003" name="Nature">
        <title>The genome of a motile marine Synechococcus.</title>
        <authorList>
            <person name="Palenik B."/>
            <person name="Brahamsha B."/>
            <person name="Larimer F.W."/>
            <person name="Land M.L."/>
            <person name="Hauser L."/>
            <person name="Chain P."/>
            <person name="Lamerdin J.E."/>
            <person name="Regala W."/>
            <person name="Allen E.E."/>
            <person name="McCarren J."/>
            <person name="Paulsen I.T."/>
            <person name="Dufresne A."/>
            <person name="Partensky F."/>
            <person name="Webb E.A."/>
            <person name="Waterbury J."/>
        </authorList>
    </citation>
    <scope>NUCLEOTIDE SEQUENCE [LARGE SCALE GENOMIC DNA]</scope>
    <source>
        <strain>WH8102</strain>
    </source>
</reference>